<evidence type="ECO:0000255" key="1">
    <source>
        <dbReference type="HAMAP-Rule" id="MF_00451"/>
    </source>
</evidence>
<accession>B6I590</accession>
<protein>
    <recommendedName>
        <fullName evidence="1">Nucleoside diphosphate kinase</fullName>
        <shortName evidence="1">NDK</shortName>
        <shortName evidence="1">NDP kinase</shortName>
        <ecNumber evidence="1">2.7.4.6</ecNumber>
    </recommendedName>
    <alternativeName>
        <fullName evidence="1">Nucleoside-2-P kinase</fullName>
    </alternativeName>
</protein>
<proteinExistence type="inferred from homology"/>
<comment type="function">
    <text evidence="1">Major role in the synthesis of nucleoside triphosphates other than ATP. The ATP gamma phosphate is transferred to the NDP beta phosphate via a ping-pong mechanism, using a phosphorylated active-site intermediate.</text>
</comment>
<comment type="catalytic activity">
    <reaction evidence="1">
        <text>a 2'-deoxyribonucleoside 5'-diphosphate + ATP = a 2'-deoxyribonucleoside 5'-triphosphate + ADP</text>
        <dbReference type="Rhea" id="RHEA:44640"/>
        <dbReference type="ChEBI" id="CHEBI:30616"/>
        <dbReference type="ChEBI" id="CHEBI:61560"/>
        <dbReference type="ChEBI" id="CHEBI:73316"/>
        <dbReference type="ChEBI" id="CHEBI:456216"/>
        <dbReference type="EC" id="2.7.4.6"/>
    </reaction>
</comment>
<comment type="catalytic activity">
    <reaction evidence="1">
        <text>a ribonucleoside 5'-diphosphate + ATP = a ribonucleoside 5'-triphosphate + ADP</text>
        <dbReference type="Rhea" id="RHEA:18113"/>
        <dbReference type="ChEBI" id="CHEBI:30616"/>
        <dbReference type="ChEBI" id="CHEBI:57930"/>
        <dbReference type="ChEBI" id="CHEBI:61557"/>
        <dbReference type="ChEBI" id="CHEBI:456216"/>
        <dbReference type="EC" id="2.7.4.6"/>
    </reaction>
</comment>
<comment type="cofactor">
    <cofactor evidence="1">
        <name>Mg(2+)</name>
        <dbReference type="ChEBI" id="CHEBI:18420"/>
    </cofactor>
</comment>
<comment type="subunit">
    <text evidence="1">Homotetramer.</text>
</comment>
<comment type="subcellular location">
    <subcellularLocation>
        <location evidence="1">Cytoplasm</location>
    </subcellularLocation>
</comment>
<comment type="similarity">
    <text evidence="1">Belongs to the NDK family.</text>
</comment>
<reference key="1">
    <citation type="journal article" date="2008" name="DNA Res.">
        <title>Complete genome sequence and comparative analysis of the wild-type commensal Escherichia coli strain SE11 isolated from a healthy adult.</title>
        <authorList>
            <person name="Oshima K."/>
            <person name="Toh H."/>
            <person name="Ogura Y."/>
            <person name="Sasamoto H."/>
            <person name="Morita H."/>
            <person name="Park S.-H."/>
            <person name="Ooka T."/>
            <person name="Iyoda S."/>
            <person name="Taylor T.D."/>
            <person name="Hayashi T."/>
            <person name="Itoh K."/>
            <person name="Hattori M."/>
        </authorList>
    </citation>
    <scope>NUCLEOTIDE SEQUENCE [LARGE SCALE GENOMIC DNA]</scope>
    <source>
        <strain>SE11</strain>
    </source>
</reference>
<gene>
    <name evidence="1" type="primary">ndk</name>
    <name type="ordered locus">ECSE_2804</name>
</gene>
<organism>
    <name type="scientific">Escherichia coli (strain SE11)</name>
    <dbReference type="NCBI Taxonomy" id="409438"/>
    <lineage>
        <taxon>Bacteria</taxon>
        <taxon>Pseudomonadati</taxon>
        <taxon>Pseudomonadota</taxon>
        <taxon>Gammaproteobacteria</taxon>
        <taxon>Enterobacterales</taxon>
        <taxon>Enterobacteriaceae</taxon>
        <taxon>Escherichia</taxon>
    </lineage>
</organism>
<name>NDK_ECOSE</name>
<feature type="chain" id="PRO_1000124962" description="Nucleoside diphosphate kinase">
    <location>
        <begin position="1"/>
        <end position="143"/>
    </location>
</feature>
<feature type="active site" description="Pros-phosphohistidine intermediate" evidence="1">
    <location>
        <position position="117"/>
    </location>
</feature>
<feature type="binding site" evidence="1">
    <location>
        <position position="11"/>
    </location>
    <ligand>
        <name>ATP</name>
        <dbReference type="ChEBI" id="CHEBI:30616"/>
    </ligand>
</feature>
<feature type="binding site" evidence="1">
    <location>
        <position position="59"/>
    </location>
    <ligand>
        <name>ATP</name>
        <dbReference type="ChEBI" id="CHEBI:30616"/>
    </ligand>
</feature>
<feature type="binding site" evidence="1">
    <location>
        <position position="87"/>
    </location>
    <ligand>
        <name>ATP</name>
        <dbReference type="ChEBI" id="CHEBI:30616"/>
    </ligand>
</feature>
<feature type="binding site" evidence="1">
    <location>
        <position position="93"/>
    </location>
    <ligand>
        <name>ATP</name>
        <dbReference type="ChEBI" id="CHEBI:30616"/>
    </ligand>
</feature>
<feature type="binding site" evidence="1">
    <location>
        <position position="104"/>
    </location>
    <ligand>
        <name>ATP</name>
        <dbReference type="ChEBI" id="CHEBI:30616"/>
    </ligand>
</feature>
<feature type="binding site" evidence="1">
    <location>
        <position position="114"/>
    </location>
    <ligand>
        <name>ATP</name>
        <dbReference type="ChEBI" id="CHEBI:30616"/>
    </ligand>
</feature>
<keyword id="KW-0067">ATP-binding</keyword>
<keyword id="KW-0963">Cytoplasm</keyword>
<keyword id="KW-0418">Kinase</keyword>
<keyword id="KW-0460">Magnesium</keyword>
<keyword id="KW-0479">Metal-binding</keyword>
<keyword id="KW-0546">Nucleotide metabolism</keyword>
<keyword id="KW-0547">Nucleotide-binding</keyword>
<keyword id="KW-0597">Phosphoprotein</keyword>
<keyword id="KW-0808">Transferase</keyword>
<dbReference type="EC" id="2.7.4.6" evidence="1"/>
<dbReference type="EMBL" id="AP009240">
    <property type="protein sequence ID" value="BAG78328.1"/>
    <property type="molecule type" value="Genomic_DNA"/>
</dbReference>
<dbReference type="RefSeq" id="WP_000963837.1">
    <property type="nucleotide sequence ID" value="NC_011415.1"/>
</dbReference>
<dbReference type="SMR" id="B6I590"/>
<dbReference type="GeneID" id="93774618"/>
<dbReference type="KEGG" id="ecy:ECSE_2804"/>
<dbReference type="HOGENOM" id="CLU_060216_8_1_6"/>
<dbReference type="Proteomes" id="UP000008199">
    <property type="component" value="Chromosome"/>
</dbReference>
<dbReference type="GO" id="GO:0005737">
    <property type="term" value="C:cytoplasm"/>
    <property type="evidence" value="ECO:0007669"/>
    <property type="project" value="UniProtKB-SubCell"/>
</dbReference>
<dbReference type="GO" id="GO:0005524">
    <property type="term" value="F:ATP binding"/>
    <property type="evidence" value="ECO:0007669"/>
    <property type="project" value="UniProtKB-UniRule"/>
</dbReference>
<dbReference type="GO" id="GO:0046872">
    <property type="term" value="F:metal ion binding"/>
    <property type="evidence" value="ECO:0007669"/>
    <property type="project" value="UniProtKB-KW"/>
</dbReference>
<dbReference type="GO" id="GO:0004550">
    <property type="term" value="F:nucleoside diphosphate kinase activity"/>
    <property type="evidence" value="ECO:0007669"/>
    <property type="project" value="UniProtKB-UniRule"/>
</dbReference>
<dbReference type="GO" id="GO:0006241">
    <property type="term" value="P:CTP biosynthetic process"/>
    <property type="evidence" value="ECO:0007669"/>
    <property type="project" value="UniProtKB-UniRule"/>
</dbReference>
<dbReference type="GO" id="GO:0006183">
    <property type="term" value="P:GTP biosynthetic process"/>
    <property type="evidence" value="ECO:0007669"/>
    <property type="project" value="UniProtKB-UniRule"/>
</dbReference>
<dbReference type="GO" id="GO:0006228">
    <property type="term" value="P:UTP biosynthetic process"/>
    <property type="evidence" value="ECO:0007669"/>
    <property type="project" value="UniProtKB-UniRule"/>
</dbReference>
<dbReference type="CDD" id="cd04413">
    <property type="entry name" value="NDPk_I"/>
    <property type="match status" value="1"/>
</dbReference>
<dbReference type="FunFam" id="3.30.70.141:FF:000001">
    <property type="entry name" value="Nucleoside diphosphate kinase"/>
    <property type="match status" value="1"/>
</dbReference>
<dbReference type="Gene3D" id="3.30.70.141">
    <property type="entry name" value="Nucleoside diphosphate kinase-like domain"/>
    <property type="match status" value="1"/>
</dbReference>
<dbReference type="HAMAP" id="MF_00451">
    <property type="entry name" value="NDP_kinase"/>
    <property type="match status" value="1"/>
</dbReference>
<dbReference type="InterPro" id="IPR034907">
    <property type="entry name" value="NDK-like_dom"/>
</dbReference>
<dbReference type="InterPro" id="IPR036850">
    <property type="entry name" value="NDK-like_dom_sf"/>
</dbReference>
<dbReference type="InterPro" id="IPR001564">
    <property type="entry name" value="Nucleoside_diP_kinase"/>
</dbReference>
<dbReference type="InterPro" id="IPR023005">
    <property type="entry name" value="Nucleoside_diP_kinase_AS"/>
</dbReference>
<dbReference type="NCBIfam" id="NF001908">
    <property type="entry name" value="PRK00668.1"/>
    <property type="match status" value="1"/>
</dbReference>
<dbReference type="PANTHER" id="PTHR46161">
    <property type="entry name" value="NUCLEOSIDE DIPHOSPHATE KINASE"/>
    <property type="match status" value="1"/>
</dbReference>
<dbReference type="PANTHER" id="PTHR46161:SF3">
    <property type="entry name" value="NUCLEOSIDE DIPHOSPHATE KINASE DDB_G0292928-RELATED"/>
    <property type="match status" value="1"/>
</dbReference>
<dbReference type="Pfam" id="PF00334">
    <property type="entry name" value="NDK"/>
    <property type="match status" value="1"/>
</dbReference>
<dbReference type="PRINTS" id="PR01243">
    <property type="entry name" value="NUCDPKINASE"/>
</dbReference>
<dbReference type="SMART" id="SM00562">
    <property type="entry name" value="NDK"/>
    <property type="match status" value="1"/>
</dbReference>
<dbReference type="SUPFAM" id="SSF54919">
    <property type="entry name" value="Nucleoside diphosphate kinase, NDK"/>
    <property type="match status" value="1"/>
</dbReference>
<dbReference type="PROSITE" id="PS00469">
    <property type="entry name" value="NDPK"/>
    <property type="match status" value="1"/>
</dbReference>
<dbReference type="PROSITE" id="PS51374">
    <property type="entry name" value="NDPK_LIKE"/>
    <property type="match status" value="1"/>
</dbReference>
<sequence>MAIERTFSIIKPNAVAKNVIGNIFARFEAAGFKIVGTKMLHLTVEQARGFYAEHDGKPFFDGLVEFMTSGPIVVSVLEGENAVQRHRDLLGATNPANALAGTLRADYADSLTENGTHGSDSVESAAREIAYFFGEGEVCPRTR</sequence>